<accession>Q4QPI9</accession>
<reference key="1">
    <citation type="journal article" date="2005" name="J. Bacteriol.">
        <title>Genomic sequence of an otitis media isolate of nontypeable Haemophilus influenzae: comparative study with H. influenzae serotype d, strain KW20.</title>
        <authorList>
            <person name="Harrison A."/>
            <person name="Dyer D.W."/>
            <person name="Gillaspy A."/>
            <person name="Ray W.C."/>
            <person name="Mungur R."/>
            <person name="Carson M.B."/>
            <person name="Zhong H."/>
            <person name="Gipson J."/>
            <person name="Gipson M."/>
            <person name="Johnson L.S."/>
            <person name="Lewis L."/>
            <person name="Bakaletz L.O."/>
            <person name="Munson R.S. Jr."/>
        </authorList>
    </citation>
    <scope>NUCLEOTIDE SEQUENCE [LARGE SCALE GENOMIC DNA]</scope>
    <source>
        <strain>86-028NP</strain>
    </source>
</reference>
<dbReference type="EC" id="4.2.1.8" evidence="1"/>
<dbReference type="EMBL" id="CP000057">
    <property type="protein sequence ID" value="AAX87058.1"/>
    <property type="molecule type" value="Genomic_DNA"/>
</dbReference>
<dbReference type="RefSeq" id="WP_011271799.1">
    <property type="nucleotide sequence ID" value="NC_007146.2"/>
</dbReference>
<dbReference type="SMR" id="Q4QPI9"/>
<dbReference type="GeneID" id="93218931"/>
<dbReference type="KEGG" id="hit:NTHI0065"/>
<dbReference type="HOGENOM" id="CLU_058621_2_0_6"/>
<dbReference type="UniPathway" id="UPA00246"/>
<dbReference type="Proteomes" id="UP000002525">
    <property type="component" value="Chromosome"/>
</dbReference>
<dbReference type="GO" id="GO:0008198">
    <property type="term" value="F:ferrous iron binding"/>
    <property type="evidence" value="ECO:0007669"/>
    <property type="project" value="TreeGrafter"/>
</dbReference>
<dbReference type="GO" id="GO:0030145">
    <property type="term" value="F:manganese ion binding"/>
    <property type="evidence" value="ECO:0007669"/>
    <property type="project" value="TreeGrafter"/>
</dbReference>
<dbReference type="GO" id="GO:0008927">
    <property type="term" value="F:mannonate dehydratase activity"/>
    <property type="evidence" value="ECO:0007669"/>
    <property type="project" value="UniProtKB-UniRule"/>
</dbReference>
<dbReference type="GO" id="GO:0042840">
    <property type="term" value="P:D-glucuronate catabolic process"/>
    <property type="evidence" value="ECO:0007669"/>
    <property type="project" value="TreeGrafter"/>
</dbReference>
<dbReference type="FunFam" id="3.20.20.150:FF:000004">
    <property type="entry name" value="Mannonate dehydratase"/>
    <property type="match status" value="1"/>
</dbReference>
<dbReference type="FunFam" id="3.20.20.150:FF:000005">
    <property type="entry name" value="Mannonate dehydratase"/>
    <property type="match status" value="1"/>
</dbReference>
<dbReference type="Gene3D" id="3.20.20.150">
    <property type="entry name" value="Divalent-metal-dependent TIM barrel enzymes"/>
    <property type="match status" value="2"/>
</dbReference>
<dbReference type="HAMAP" id="MF_00106">
    <property type="entry name" value="UxuA"/>
    <property type="match status" value="1"/>
</dbReference>
<dbReference type="InterPro" id="IPR004628">
    <property type="entry name" value="Man_deHydtase"/>
</dbReference>
<dbReference type="InterPro" id="IPR036237">
    <property type="entry name" value="Xyl_isomerase-like_sf"/>
</dbReference>
<dbReference type="NCBIfam" id="NF003027">
    <property type="entry name" value="PRK03906.1"/>
    <property type="match status" value="1"/>
</dbReference>
<dbReference type="NCBIfam" id="TIGR00695">
    <property type="entry name" value="uxuA"/>
    <property type="match status" value="1"/>
</dbReference>
<dbReference type="PANTHER" id="PTHR30387">
    <property type="entry name" value="MANNONATE DEHYDRATASE"/>
    <property type="match status" value="1"/>
</dbReference>
<dbReference type="PANTHER" id="PTHR30387:SF2">
    <property type="entry name" value="MANNONATE DEHYDRATASE"/>
    <property type="match status" value="1"/>
</dbReference>
<dbReference type="Pfam" id="PF03786">
    <property type="entry name" value="UxuA"/>
    <property type="match status" value="1"/>
</dbReference>
<dbReference type="PIRSF" id="PIRSF016049">
    <property type="entry name" value="Man_dehyd"/>
    <property type="match status" value="1"/>
</dbReference>
<dbReference type="SUPFAM" id="SSF51658">
    <property type="entry name" value="Xylose isomerase-like"/>
    <property type="match status" value="1"/>
</dbReference>
<protein>
    <recommendedName>
        <fullName evidence="1">Mannonate dehydratase</fullName>
        <ecNumber evidence="1">4.2.1.8</ecNumber>
    </recommendedName>
    <alternativeName>
        <fullName evidence="1">D-mannonate hydro-lyase</fullName>
    </alternativeName>
</protein>
<gene>
    <name evidence="1" type="primary">uxuA</name>
    <name type="ordered locus">NTHI0065</name>
</gene>
<evidence type="ECO:0000255" key="1">
    <source>
        <dbReference type="HAMAP-Rule" id="MF_00106"/>
    </source>
</evidence>
<proteinExistence type="inferred from homology"/>
<feature type="chain" id="PRO_0000231053" description="Mannonate dehydratase">
    <location>
        <begin position="1"/>
        <end position="394"/>
    </location>
</feature>
<organism>
    <name type="scientific">Haemophilus influenzae (strain 86-028NP)</name>
    <dbReference type="NCBI Taxonomy" id="281310"/>
    <lineage>
        <taxon>Bacteria</taxon>
        <taxon>Pseudomonadati</taxon>
        <taxon>Pseudomonadota</taxon>
        <taxon>Gammaproteobacteria</taxon>
        <taxon>Pasteurellales</taxon>
        <taxon>Pasteurellaceae</taxon>
        <taxon>Haemophilus</taxon>
    </lineage>
</organism>
<name>UXUA_HAEI8</name>
<comment type="function">
    <text evidence="1">Catalyzes the dehydration of D-mannonate.</text>
</comment>
<comment type="catalytic activity">
    <reaction evidence="1">
        <text>D-mannonate = 2-dehydro-3-deoxy-D-gluconate + H2O</text>
        <dbReference type="Rhea" id="RHEA:20097"/>
        <dbReference type="ChEBI" id="CHEBI:15377"/>
        <dbReference type="ChEBI" id="CHEBI:17767"/>
        <dbReference type="ChEBI" id="CHEBI:57990"/>
        <dbReference type="EC" id="4.2.1.8"/>
    </reaction>
</comment>
<comment type="cofactor">
    <cofactor evidence="1">
        <name>Fe(2+)</name>
        <dbReference type="ChEBI" id="CHEBI:29033"/>
    </cofactor>
    <cofactor evidence="1">
        <name>Mn(2+)</name>
        <dbReference type="ChEBI" id="CHEBI:29035"/>
    </cofactor>
</comment>
<comment type="pathway">
    <text evidence="1">Carbohydrate metabolism; pentose and glucuronate interconversion.</text>
</comment>
<comment type="similarity">
    <text evidence="1">Belongs to the mannonate dehydratase family.</text>
</comment>
<sequence length="394" mass="45307">MEQAWRWYGPKDPVSLSDIRQAGATGIVTALHHIPNGEVWSIEEIKKRKTEIENAGLSWSVVESVPVHEEIKTQTGNYQKWINNYKQTLRNLAQCGIDTVCYNFMPVLDWTRTDLAYELPDGSKALRFDHIAFAAFELHILKRPDAEKAYNQEEQVAARTYYDKMSEQDITQLTRNIIAGLPGAEEGYTLDEFQTQLDRYKDISPEKFRTHLAYFLNEIVPVAQEVGIKMAIHPDDPPRPILGLPRIVSTIEDMQWFVETQPLPANGFTMCTGSYGVRSDNDLVKMTEQFADRIYFAHLRSTQREDNPLTFHEAAHLEGDVDMFNVVKALLNEEYRRLNQGETRLIPMRPDHGHQMLDDLRKKTNPGYSAIGRLKGLAEFRGLEMALKKVYFNK</sequence>
<keyword id="KW-0408">Iron</keyword>
<keyword id="KW-0456">Lyase</keyword>
<keyword id="KW-0464">Manganese</keyword>